<keyword id="KW-1185">Reference proteome</keyword>
<keyword id="KW-1277">Toxin-antitoxin system</keyword>
<gene>
    <name type="primary">mazE1</name>
    <name type="ordered locus">BQ2027_MB1531</name>
</gene>
<reference key="1">
    <citation type="journal article" date="2003" name="Proc. Natl. Acad. Sci. U.S.A.">
        <title>The complete genome sequence of Mycobacterium bovis.</title>
        <authorList>
            <person name="Garnier T."/>
            <person name="Eiglmeier K."/>
            <person name="Camus J.-C."/>
            <person name="Medina N."/>
            <person name="Mansoor H."/>
            <person name="Pryor M."/>
            <person name="Duthoy S."/>
            <person name="Grondin S."/>
            <person name="Lacroix C."/>
            <person name="Monsempe C."/>
            <person name="Simon S."/>
            <person name="Harris B."/>
            <person name="Atkin R."/>
            <person name="Doggett J."/>
            <person name="Mayes R."/>
            <person name="Keating L."/>
            <person name="Wheeler P.R."/>
            <person name="Parkhill J."/>
            <person name="Barrell B.G."/>
            <person name="Cole S.T."/>
            <person name="Gordon S.V."/>
            <person name="Hewinson R.G."/>
        </authorList>
    </citation>
    <scope>NUCLEOTIDE SEQUENCE [LARGE SCALE GENOMIC DNA]</scope>
    <source>
        <strain>ATCC BAA-935 / AF2122/97</strain>
    </source>
</reference>
<reference key="2">
    <citation type="journal article" date="2017" name="Genome Announc.">
        <title>Updated reference genome sequence and annotation of Mycobacterium bovis AF2122/97.</title>
        <authorList>
            <person name="Malone K.M."/>
            <person name="Farrell D."/>
            <person name="Stuber T.P."/>
            <person name="Schubert O.T."/>
            <person name="Aebersold R."/>
            <person name="Robbe-Austerman S."/>
            <person name="Gordon S.V."/>
        </authorList>
    </citation>
    <scope>NUCLEOTIDE SEQUENCE [LARGE SCALE GENOMIC DNA]</scope>
    <scope>GENOME REANNOTATION</scope>
    <source>
        <strain>ATCC BAA-935 / AF2122/97</strain>
    </source>
</reference>
<dbReference type="EMBL" id="LT708304">
    <property type="protein sequence ID" value="SIU00134.1"/>
    <property type="molecule type" value="Genomic_DNA"/>
</dbReference>
<dbReference type="RefSeq" id="NP_855183.1">
    <property type="nucleotide sequence ID" value="NC_002945.3"/>
</dbReference>
<dbReference type="SMR" id="P0A5F0"/>
<dbReference type="KEGG" id="mbo:BQ2027_MB1531"/>
<dbReference type="PATRIC" id="fig|233413.5.peg.1673"/>
<dbReference type="Proteomes" id="UP000001419">
    <property type="component" value="Chromosome"/>
</dbReference>
<accession>P0A5F0</accession>
<accession>A0A1R3XZH8</accession>
<accession>P71775</accession>
<accession>X2BI30</accession>
<evidence type="ECO:0000250" key="1">
    <source>
        <dbReference type="UniProtKB" id="P9WJ91"/>
    </source>
</evidence>
<evidence type="ECO:0000256" key="2">
    <source>
        <dbReference type="SAM" id="MobiDB-lite"/>
    </source>
</evidence>
<feature type="chain" id="PRO_0000103859" description="Probable antitoxin MazE1">
    <location>
        <begin position="1"/>
        <end position="100"/>
    </location>
</feature>
<feature type="region of interest" description="Disordered" evidence="2">
    <location>
        <begin position="77"/>
        <end position="100"/>
    </location>
</feature>
<organism>
    <name type="scientific">Mycobacterium bovis (strain ATCC BAA-935 / AF2122/97)</name>
    <dbReference type="NCBI Taxonomy" id="233413"/>
    <lineage>
        <taxon>Bacteria</taxon>
        <taxon>Bacillati</taxon>
        <taxon>Actinomycetota</taxon>
        <taxon>Actinomycetes</taxon>
        <taxon>Mycobacteriales</taxon>
        <taxon>Mycobacteriaceae</taxon>
        <taxon>Mycobacterium</taxon>
        <taxon>Mycobacterium tuberculosis complex</taxon>
    </lineage>
</organism>
<comment type="function">
    <text evidence="1">Probable antitoxin component of a type II toxin-antitoxin (TA) system. Labile antitoxin that binds to cognate MazF1 toxin and counteracts its endoribonuclease activity.</text>
</comment>
<comment type="subunit">
    <text evidence="1">Forms a complex with cognate toxin MazF1.</text>
</comment>
<protein>
    <recommendedName>
        <fullName>Probable antitoxin MazE1</fullName>
    </recommendedName>
</protein>
<proteinExistence type="inferred from homology"/>
<sequence>MPFLVALSGIISGVRDHSMTVRLDQQTRQRLQDIVKGGYRSANAAIVDAINKRWEALHDEQLDAAYAAAIHDNPAYPYESEAERSAARARRNARQQRSAQ</sequence>
<name>MAZE1_MYCBO</name>